<organism>
    <name type="scientific">Rattus norvegicus</name>
    <name type="common">Rat</name>
    <dbReference type="NCBI Taxonomy" id="10116"/>
    <lineage>
        <taxon>Eukaryota</taxon>
        <taxon>Metazoa</taxon>
        <taxon>Chordata</taxon>
        <taxon>Craniata</taxon>
        <taxon>Vertebrata</taxon>
        <taxon>Euteleostomi</taxon>
        <taxon>Mammalia</taxon>
        <taxon>Eutheria</taxon>
        <taxon>Euarchontoglires</taxon>
        <taxon>Glires</taxon>
        <taxon>Rodentia</taxon>
        <taxon>Myomorpha</taxon>
        <taxon>Muroidea</taxon>
        <taxon>Muridae</taxon>
        <taxon>Murinae</taxon>
        <taxon>Rattus</taxon>
    </lineage>
</organism>
<keyword id="KW-0407">Ion channel</keyword>
<keyword id="KW-0406">Ion transport</keyword>
<keyword id="KW-0472">Membrane</keyword>
<keyword id="KW-0597">Phosphoprotein</keyword>
<keyword id="KW-0630">Potassium</keyword>
<keyword id="KW-0631">Potassium channel</keyword>
<keyword id="KW-0633">Potassium transport</keyword>
<keyword id="KW-1185">Reference proteome</keyword>
<keyword id="KW-0812">Transmembrane</keyword>
<keyword id="KW-1133">Transmembrane helix</keyword>
<keyword id="KW-0813">Transport</keyword>
<keyword id="KW-0851">Voltage-gated channel</keyword>
<feature type="chain" id="PRO_0000101766" description="Potassium channel subfamily K member 15">
    <location>
        <begin position="1"/>
        <end position="318"/>
    </location>
</feature>
<feature type="topological domain" description="Cytoplasmic" evidence="1">
    <location>
        <begin position="1"/>
        <end position="8"/>
    </location>
</feature>
<feature type="transmembrane region" description="Helical" evidence="1">
    <location>
        <begin position="9"/>
        <end position="29"/>
    </location>
</feature>
<feature type="intramembrane region" description="Pore-forming; Name=Pore-forming 1" evidence="1">
    <location>
        <begin position="80"/>
        <end position="101"/>
    </location>
</feature>
<feature type="transmembrane region" description="Helical" evidence="1">
    <location>
        <begin position="108"/>
        <end position="128"/>
    </location>
</feature>
<feature type="topological domain" description="Cytoplasmic" evidence="1">
    <location>
        <begin position="129"/>
        <end position="158"/>
    </location>
</feature>
<feature type="transmembrane region" description="Helical" evidence="1">
    <location>
        <begin position="159"/>
        <end position="179"/>
    </location>
</feature>
<feature type="intramembrane region" description="Pore-forming; Name=Pore-forming 2" evidence="1">
    <location>
        <begin position="189"/>
        <end position="209"/>
    </location>
</feature>
<feature type="transmembrane region" description="Helical" evidence="1">
    <location>
        <begin position="223"/>
        <end position="243"/>
    </location>
</feature>
<feature type="topological domain" description="Cytoplasmic" evidence="1">
    <location>
        <begin position="244"/>
        <end position="318"/>
    </location>
</feature>
<feature type="region of interest" description="Disordered" evidence="2">
    <location>
        <begin position="296"/>
        <end position="318"/>
    </location>
</feature>
<feature type="compositionally biased region" description="Basic and acidic residues" evidence="2">
    <location>
        <begin position="300"/>
        <end position="311"/>
    </location>
</feature>
<feature type="sequence conflict" description="In Ref. 2; AAK97094." evidence="3" ref="2">
    <original>R</original>
    <variation>W</variation>
    <location>
        <position position="315"/>
    </location>
</feature>
<gene>
    <name type="primary">Kcnk15</name>
    <name type="synonym">Task5</name>
</gene>
<proteinExistence type="evidence at transcript level"/>
<evidence type="ECO:0000255" key="1"/>
<evidence type="ECO:0000256" key="2">
    <source>
        <dbReference type="SAM" id="MobiDB-lite"/>
    </source>
</evidence>
<evidence type="ECO:0000305" key="3"/>
<accession>Q8R5I0</accession>
<accession>Q920G1</accession>
<reference key="1">
    <citation type="submission" date="2002-01" db="EMBL/GenBank/DDBJ databases">
        <authorList>
            <person name="Kawano T."/>
            <person name="Nakajima S."/>
            <person name="Nakajima Y."/>
        </authorList>
    </citation>
    <scope>NUCLEOTIDE SEQUENCE [MRNA]</scope>
    <source>
        <strain>Long Evans</strain>
        <tissue>Brain</tissue>
    </source>
</reference>
<reference key="2">
    <citation type="journal article" date="2001" name="Mol. Cell. Neurosci.">
        <title>Expression pattern in brain of TASK-1, TASK-3, and a tandem pore domain K(+) channel subunit, TASK-5, associated with the central auditory nervous system.</title>
        <authorList>
            <person name="Karschin C."/>
            <person name="Wischmeyer E."/>
            <person name="Preisig-Mueller R."/>
            <person name="Rajan S."/>
            <person name="Derst C."/>
            <person name="Grzeschik K.-H."/>
            <person name="Daut J."/>
            <person name="Karschin A."/>
        </authorList>
    </citation>
    <scope>NUCLEOTIDE SEQUENCE [MRNA] OF 82-318</scope>
    <source>
        <strain>Wistar</strain>
    </source>
</reference>
<name>KCNKF_RAT</name>
<comment type="function">
    <text>Probable potassium channel subunit. No channel activity observed in heterologous systems. May need to associate with another protein to form a functional channel.</text>
</comment>
<comment type="subunit">
    <text evidence="3">Heterodimer.</text>
</comment>
<comment type="subcellular location">
    <subcellularLocation>
        <location>Membrane</location>
        <topology>Multi-pass membrane protein</topology>
    </subcellularLocation>
</comment>
<comment type="tissue specificity">
    <text>Brain-specific. Highly expressed in auditory nuclei, in Purkinje cells and in olfactory bulb mitral cells.</text>
</comment>
<comment type="PTM">
    <text evidence="3">Phosphorylated.</text>
</comment>
<comment type="similarity">
    <text evidence="3">Belongs to the two pore domain potassium channel (TC 1.A.1.8) family.</text>
</comment>
<sequence length="318" mass="35652">MRKQSARTAALILCILSYLLVGAAVFDALESEAERSRQRLLARKRGEFRRKYRFSADDYRELERLALQAEPHRAGRQWRFAGSFYFAITVITTIGYGHAAPGTDSGKVFCMFYALLGIPLTLVTFQSLGERLNALVRCLLLAAKRCLGLRRPHVSAENMVVAGLLLCAATLALGAAAFAHFEGWTFFHAYYYCFITLTTIGFGDFVALQRDEALQKKPPYVAFSFLYILLGLTVIGAFLNLVVLRFLASAEAPERAALRRASVFRRGAPESRVRIPYPFHPLETWARDNPAFSPPLSPEAVHDCHSSPDRLRARRKSI</sequence>
<dbReference type="EMBL" id="AF467250">
    <property type="protein sequence ID" value="AAL77036.1"/>
    <property type="molecule type" value="mRNA"/>
</dbReference>
<dbReference type="EMBL" id="AF294353">
    <property type="protein sequence ID" value="AAK97094.1"/>
    <property type="molecule type" value="mRNA"/>
</dbReference>
<dbReference type="RefSeq" id="NP_570826.1">
    <property type="nucleotide sequence ID" value="NM_130813.1"/>
</dbReference>
<dbReference type="SMR" id="Q8R5I0"/>
<dbReference type="FunCoup" id="Q8R5I0">
    <property type="interactions" value="38"/>
</dbReference>
<dbReference type="STRING" id="10116.ENSRNOP00000014411"/>
<dbReference type="PhosphoSitePlus" id="Q8R5I0"/>
<dbReference type="PaxDb" id="10116-ENSRNOP00000014411"/>
<dbReference type="Ensembl" id="ENSRNOT00000014411.3">
    <property type="protein sequence ID" value="ENSRNOP00000014411.2"/>
    <property type="gene ID" value="ENSRNOG00000010816.3"/>
</dbReference>
<dbReference type="GeneID" id="156873"/>
<dbReference type="KEGG" id="rno:156873"/>
<dbReference type="AGR" id="RGD:619733"/>
<dbReference type="CTD" id="60598"/>
<dbReference type="RGD" id="619733">
    <property type="gene designation" value="Kcnk15"/>
</dbReference>
<dbReference type="eggNOG" id="KOG4404">
    <property type="taxonomic scope" value="Eukaryota"/>
</dbReference>
<dbReference type="GeneTree" id="ENSGT00940000160902"/>
<dbReference type="HOGENOM" id="CLU_022504_4_2_1"/>
<dbReference type="InParanoid" id="Q8R5I0"/>
<dbReference type="OMA" id="ERKRWEF"/>
<dbReference type="OrthoDB" id="297496at2759"/>
<dbReference type="PhylomeDB" id="Q8R5I0"/>
<dbReference type="Reactome" id="R-RNO-5576886">
    <property type="pathway name" value="Phase 4 - resting membrane potential"/>
</dbReference>
<dbReference type="PRO" id="PR:Q8R5I0"/>
<dbReference type="Proteomes" id="UP000002494">
    <property type="component" value="Chromosome 3"/>
</dbReference>
<dbReference type="Bgee" id="ENSRNOG00000010816">
    <property type="expression patterns" value="Expressed in brain and 3 other cell types or tissues"/>
</dbReference>
<dbReference type="GO" id="GO:0034702">
    <property type="term" value="C:monoatomic ion channel complex"/>
    <property type="evidence" value="ECO:0007669"/>
    <property type="project" value="UniProtKB-KW"/>
</dbReference>
<dbReference type="GO" id="GO:0005886">
    <property type="term" value="C:plasma membrane"/>
    <property type="evidence" value="ECO:0000318"/>
    <property type="project" value="GO_Central"/>
</dbReference>
<dbReference type="GO" id="GO:0022841">
    <property type="term" value="F:potassium ion leak channel activity"/>
    <property type="evidence" value="ECO:0000318"/>
    <property type="project" value="GO_Central"/>
</dbReference>
<dbReference type="GO" id="GO:0071805">
    <property type="term" value="P:potassium ion transmembrane transport"/>
    <property type="evidence" value="ECO:0000318"/>
    <property type="project" value="GO_Central"/>
</dbReference>
<dbReference type="FunFam" id="1.10.287.70:FF:000057">
    <property type="entry name" value="Potassium channel subfamily K member"/>
    <property type="match status" value="1"/>
</dbReference>
<dbReference type="Gene3D" id="1.10.287.70">
    <property type="match status" value="1"/>
</dbReference>
<dbReference type="InterPro" id="IPR003280">
    <property type="entry name" value="2pore_dom_K_chnl"/>
</dbReference>
<dbReference type="InterPro" id="IPR003092">
    <property type="entry name" value="2pore_dom_K_chnl_TASK"/>
</dbReference>
<dbReference type="InterPro" id="IPR013099">
    <property type="entry name" value="K_chnl_dom"/>
</dbReference>
<dbReference type="InterPro" id="IPR008073">
    <property type="entry name" value="TASK5"/>
</dbReference>
<dbReference type="PANTHER" id="PTHR11003:SF18">
    <property type="entry name" value="POTASSIUM CHANNEL SUBFAMILY K MEMBER 15"/>
    <property type="match status" value="1"/>
</dbReference>
<dbReference type="PANTHER" id="PTHR11003">
    <property type="entry name" value="POTASSIUM CHANNEL, SUBFAMILY K"/>
    <property type="match status" value="1"/>
</dbReference>
<dbReference type="Pfam" id="PF07885">
    <property type="entry name" value="Ion_trans_2"/>
    <property type="match status" value="2"/>
</dbReference>
<dbReference type="PRINTS" id="PR01333">
    <property type="entry name" value="2POREKCHANEL"/>
</dbReference>
<dbReference type="PRINTS" id="PR01690">
    <property type="entry name" value="TASK5CHANNEL"/>
</dbReference>
<dbReference type="PRINTS" id="PR01095">
    <property type="entry name" value="TASKCHANNEL"/>
</dbReference>
<dbReference type="SUPFAM" id="SSF81324">
    <property type="entry name" value="Voltage-gated potassium channels"/>
    <property type="match status" value="2"/>
</dbReference>
<protein>
    <recommendedName>
        <fullName>Potassium channel subfamily K member 15</fullName>
    </recommendedName>
    <alternativeName>
        <fullName>Acid-sensitive potassium channel protein TASK-5</fullName>
        <shortName>rTASK-5</shortName>
    </alternativeName>
    <alternativeName>
        <fullName>TWIK-related acid-sensitive K(+) channel 5</fullName>
    </alternativeName>
</protein>